<organism>
    <name type="scientific">Sulfurovum sp. (strain NBC37-1)</name>
    <dbReference type="NCBI Taxonomy" id="387093"/>
    <lineage>
        <taxon>Bacteria</taxon>
        <taxon>Pseudomonadati</taxon>
        <taxon>Campylobacterota</taxon>
        <taxon>Epsilonproteobacteria</taxon>
        <taxon>Campylobacterales</taxon>
        <taxon>Sulfurovaceae</taxon>
        <taxon>Sulfurovum</taxon>
    </lineage>
</organism>
<feature type="chain" id="PRO_1000016227" description="Aspartyl/glutamyl-tRNA(Asn/Gln) amidotransferase subunit C">
    <location>
        <begin position="1"/>
        <end position="96"/>
    </location>
</feature>
<gene>
    <name evidence="1" type="primary">gatC</name>
    <name type="ordered locus">SUN_0487</name>
</gene>
<sequence length="96" mass="10879">MQIDNTVLEKLEKLSHLRIDDSKKEEVMGQLSEILGYIDNLNELNTDHLDAAFSTLKGGTPLREDIPRTENNIARDILSRAPESKDDFFIVPAIIE</sequence>
<dbReference type="EC" id="6.3.5.-" evidence="1"/>
<dbReference type="EMBL" id="AP009179">
    <property type="protein sequence ID" value="BAF71447.1"/>
    <property type="molecule type" value="Genomic_DNA"/>
</dbReference>
<dbReference type="RefSeq" id="WP_011980180.1">
    <property type="nucleotide sequence ID" value="NC_009663.1"/>
</dbReference>
<dbReference type="SMR" id="A6Q7I8"/>
<dbReference type="STRING" id="387093.SUN_0487"/>
<dbReference type="KEGG" id="sun:SUN_0487"/>
<dbReference type="eggNOG" id="COG0721">
    <property type="taxonomic scope" value="Bacteria"/>
</dbReference>
<dbReference type="HOGENOM" id="CLU_105899_2_1_7"/>
<dbReference type="OrthoDB" id="9813938at2"/>
<dbReference type="Proteomes" id="UP000006378">
    <property type="component" value="Chromosome"/>
</dbReference>
<dbReference type="GO" id="GO:0050566">
    <property type="term" value="F:asparaginyl-tRNA synthase (glutamine-hydrolyzing) activity"/>
    <property type="evidence" value="ECO:0007669"/>
    <property type="project" value="RHEA"/>
</dbReference>
<dbReference type="GO" id="GO:0005524">
    <property type="term" value="F:ATP binding"/>
    <property type="evidence" value="ECO:0007669"/>
    <property type="project" value="UniProtKB-KW"/>
</dbReference>
<dbReference type="GO" id="GO:0050567">
    <property type="term" value="F:glutaminyl-tRNA synthase (glutamine-hydrolyzing) activity"/>
    <property type="evidence" value="ECO:0007669"/>
    <property type="project" value="UniProtKB-UniRule"/>
</dbReference>
<dbReference type="GO" id="GO:0070681">
    <property type="term" value="P:glutaminyl-tRNAGln biosynthesis via transamidation"/>
    <property type="evidence" value="ECO:0007669"/>
    <property type="project" value="TreeGrafter"/>
</dbReference>
<dbReference type="GO" id="GO:0006450">
    <property type="term" value="P:regulation of translational fidelity"/>
    <property type="evidence" value="ECO:0007669"/>
    <property type="project" value="InterPro"/>
</dbReference>
<dbReference type="GO" id="GO:0006412">
    <property type="term" value="P:translation"/>
    <property type="evidence" value="ECO:0007669"/>
    <property type="project" value="UniProtKB-UniRule"/>
</dbReference>
<dbReference type="Gene3D" id="1.10.20.60">
    <property type="entry name" value="Glu-tRNAGln amidotransferase C subunit, N-terminal domain"/>
    <property type="match status" value="1"/>
</dbReference>
<dbReference type="HAMAP" id="MF_00122">
    <property type="entry name" value="GatC"/>
    <property type="match status" value="1"/>
</dbReference>
<dbReference type="InterPro" id="IPR036113">
    <property type="entry name" value="Asp/Glu-ADT_sf_sub_c"/>
</dbReference>
<dbReference type="InterPro" id="IPR003837">
    <property type="entry name" value="GatC"/>
</dbReference>
<dbReference type="NCBIfam" id="TIGR00135">
    <property type="entry name" value="gatC"/>
    <property type="match status" value="1"/>
</dbReference>
<dbReference type="PANTHER" id="PTHR15004">
    <property type="entry name" value="GLUTAMYL-TRNA(GLN) AMIDOTRANSFERASE SUBUNIT C, MITOCHONDRIAL"/>
    <property type="match status" value="1"/>
</dbReference>
<dbReference type="PANTHER" id="PTHR15004:SF0">
    <property type="entry name" value="GLUTAMYL-TRNA(GLN) AMIDOTRANSFERASE SUBUNIT C, MITOCHONDRIAL"/>
    <property type="match status" value="1"/>
</dbReference>
<dbReference type="Pfam" id="PF02686">
    <property type="entry name" value="GatC"/>
    <property type="match status" value="1"/>
</dbReference>
<dbReference type="SUPFAM" id="SSF141000">
    <property type="entry name" value="Glu-tRNAGln amidotransferase C subunit"/>
    <property type="match status" value="1"/>
</dbReference>
<accession>A6Q7I8</accession>
<protein>
    <recommendedName>
        <fullName evidence="1">Aspartyl/glutamyl-tRNA(Asn/Gln) amidotransferase subunit C</fullName>
        <shortName evidence="1">Asp/Glu-ADT subunit C</shortName>
        <ecNumber evidence="1">6.3.5.-</ecNumber>
    </recommendedName>
</protein>
<keyword id="KW-0067">ATP-binding</keyword>
<keyword id="KW-0436">Ligase</keyword>
<keyword id="KW-0547">Nucleotide-binding</keyword>
<keyword id="KW-0648">Protein biosynthesis</keyword>
<proteinExistence type="inferred from homology"/>
<comment type="function">
    <text evidence="1">Allows the formation of correctly charged Asn-tRNA(Asn) or Gln-tRNA(Gln) through the transamidation of misacylated Asp-tRNA(Asn) or Glu-tRNA(Gln) in organisms which lack either or both of asparaginyl-tRNA or glutaminyl-tRNA synthetases. The reaction takes place in the presence of glutamine and ATP through an activated phospho-Asp-tRNA(Asn) or phospho-Glu-tRNA(Gln).</text>
</comment>
<comment type="catalytic activity">
    <reaction evidence="1">
        <text>L-glutamyl-tRNA(Gln) + L-glutamine + ATP + H2O = L-glutaminyl-tRNA(Gln) + L-glutamate + ADP + phosphate + H(+)</text>
        <dbReference type="Rhea" id="RHEA:17521"/>
        <dbReference type="Rhea" id="RHEA-COMP:9681"/>
        <dbReference type="Rhea" id="RHEA-COMP:9684"/>
        <dbReference type="ChEBI" id="CHEBI:15377"/>
        <dbReference type="ChEBI" id="CHEBI:15378"/>
        <dbReference type="ChEBI" id="CHEBI:29985"/>
        <dbReference type="ChEBI" id="CHEBI:30616"/>
        <dbReference type="ChEBI" id="CHEBI:43474"/>
        <dbReference type="ChEBI" id="CHEBI:58359"/>
        <dbReference type="ChEBI" id="CHEBI:78520"/>
        <dbReference type="ChEBI" id="CHEBI:78521"/>
        <dbReference type="ChEBI" id="CHEBI:456216"/>
    </reaction>
</comment>
<comment type="catalytic activity">
    <reaction evidence="1">
        <text>L-aspartyl-tRNA(Asn) + L-glutamine + ATP + H2O = L-asparaginyl-tRNA(Asn) + L-glutamate + ADP + phosphate + 2 H(+)</text>
        <dbReference type="Rhea" id="RHEA:14513"/>
        <dbReference type="Rhea" id="RHEA-COMP:9674"/>
        <dbReference type="Rhea" id="RHEA-COMP:9677"/>
        <dbReference type="ChEBI" id="CHEBI:15377"/>
        <dbReference type="ChEBI" id="CHEBI:15378"/>
        <dbReference type="ChEBI" id="CHEBI:29985"/>
        <dbReference type="ChEBI" id="CHEBI:30616"/>
        <dbReference type="ChEBI" id="CHEBI:43474"/>
        <dbReference type="ChEBI" id="CHEBI:58359"/>
        <dbReference type="ChEBI" id="CHEBI:78515"/>
        <dbReference type="ChEBI" id="CHEBI:78516"/>
        <dbReference type="ChEBI" id="CHEBI:456216"/>
    </reaction>
</comment>
<comment type="subunit">
    <text evidence="1">Heterotrimer of A, B and C subunits.</text>
</comment>
<comment type="similarity">
    <text evidence="1">Belongs to the GatC family.</text>
</comment>
<reference key="1">
    <citation type="journal article" date="2007" name="Proc. Natl. Acad. Sci. U.S.A.">
        <title>Deep-sea vent epsilon-proteobacterial genomes provide insights into emergence of pathogens.</title>
        <authorList>
            <person name="Nakagawa S."/>
            <person name="Takaki Y."/>
            <person name="Shimamura S."/>
            <person name="Reysenbach A.-L."/>
            <person name="Takai K."/>
            <person name="Horikoshi K."/>
        </authorList>
    </citation>
    <scope>NUCLEOTIDE SEQUENCE [LARGE SCALE GENOMIC DNA]</scope>
    <source>
        <strain>NBC37-1</strain>
    </source>
</reference>
<name>GATC_SULNB</name>
<evidence type="ECO:0000255" key="1">
    <source>
        <dbReference type="HAMAP-Rule" id="MF_00122"/>
    </source>
</evidence>